<keyword id="KW-0002">3D-structure</keyword>
<keyword id="KW-0025">Alternative splicing</keyword>
<keyword id="KW-0072">Autophagy</keyword>
<keyword id="KW-0963">Cytoplasm</keyword>
<keyword id="KW-0968">Cytoplasmic vesicle</keyword>
<keyword id="KW-0206">Cytoskeleton</keyword>
<keyword id="KW-0256">Endoplasmic reticulum</keyword>
<keyword id="KW-0333">Golgi apparatus</keyword>
<keyword id="KW-0945">Host-virus interaction</keyword>
<keyword id="KW-0449">Lipoprotein</keyword>
<keyword id="KW-0472">Membrane</keyword>
<keyword id="KW-0493">Microtubule</keyword>
<keyword id="KW-1267">Proteomics identification</keyword>
<keyword id="KW-1185">Reference proteome</keyword>
<feature type="chain" id="PRO_0000212369" description="Gamma-aminobutyric acid receptor-associated protein-like 1">
    <location>
        <begin position="1"/>
        <end position="116"/>
    </location>
</feature>
<feature type="propeptide" id="PRO_0000420208" description="Removed in mature form" evidence="34">
    <location>
        <position position="117"/>
    </location>
</feature>
<feature type="site" description="(Microbial infection) Cleavage; by RavZ" evidence="13">
    <location>
        <begin position="115"/>
        <end position="116"/>
    </location>
</feature>
<feature type="site" description="Cleavage; by ATG4B" evidence="7">
    <location>
        <begin position="116"/>
        <end position="117"/>
    </location>
</feature>
<feature type="lipid moiety-binding region" description="Phosphatidylethanolamine amidated glycine; alternate" evidence="29 34 36">
    <location>
        <position position="116"/>
    </location>
</feature>
<feature type="lipid moiety-binding region" description="Phosphatidylserine amidated glycine; alternate" evidence="29">
    <location>
        <position position="116"/>
    </location>
</feature>
<feature type="splice variant" id="VSP_044422" description="In isoform 2." evidence="31 32">
    <original>DNHEEDYFLYVAYSDESVYGK</original>
    <variation>VMVLVAQYWMPSSAVWHPLALVLDALITHLRSGAEGVIYPDPLTYGSVRL</variation>
    <location>
        <begin position="97"/>
        <end position="117"/>
    </location>
</feature>
<feature type="mutagenesis site" description="Abolished interaction with ATG4B." evidence="21">
    <original>H</original>
    <variation>A</variation>
    <location>
        <position position="9"/>
    </location>
</feature>
<feature type="mutagenesis site" description="Does not affect interaction with ATG4B." evidence="21">
    <original>R</original>
    <variation>A</variation>
    <location>
        <position position="28"/>
    </location>
</feature>
<feature type="mutagenesis site" description="Abolished interaction with ATG4B." evidence="21">
    <original>R</original>
    <variation>A</variation>
    <location>
        <position position="47"/>
    </location>
</feature>
<feature type="mutagenesis site" description="Abolished interaction with ATG4B." evidence="21">
    <original>R</original>
    <variation>A</variation>
    <location>
        <position position="67"/>
    </location>
</feature>
<feature type="mutagenesis site" description="No processing of precursor." evidence="7">
    <original>G</original>
    <variation>A</variation>
    <location>
        <position position="116"/>
    </location>
</feature>
<feature type="helix" evidence="40">
    <location>
        <begin position="4"/>
        <end position="8"/>
    </location>
</feature>
<feature type="helix" evidence="40">
    <location>
        <begin position="11"/>
        <end position="24"/>
    </location>
</feature>
<feature type="strand" evidence="40">
    <location>
        <begin position="28"/>
        <end position="35"/>
    </location>
</feature>
<feature type="strand" evidence="40">
    <location>
        <begin position="48"/>
        <end position="52"/>
    </location>
</feature>
<feature type="helix" evidence="40">
    <location>
        <begin position="57"/>
        <end position="67"/>
    </location>
</feature>
<feature type="strand" evidence="40">
    <location>
        <begin position="77"/>
        <end position="80"/>
    </location>
</feature>
<feature type="strand" evidence="41">
    <location>
        <begin position="87"/>
        <end position="90"/>
    </location>
</feature>
<feature type="helix" evidence="40">
    <location>
        <begin position="91"/>
        <end position="98"/>
    </location>
</feature>
<feature type="strand" evidence="40">
    <location>
        <begin position="105"/>
        <end position="115"/>
    </location>
</feature>
<organism>
    <name type="scientific">Homo sapiens</name>
    <name type="common">Human</name>
    <dbReference type="NCBI Taxonomy" id="9606"/>
    <lineage>
        <taxon>Eukaryota</taxon>
        <taxon>Metazoa</taxon>
        <taxon>Chordata</taxon>
        <taxon>Craniata</taxon>
        <taxon>Vertebrata</taxon>
        <taxon>Euteleostomi</taxon>
        <taxon>Mammalia</taxon>
        <taxon>Eutheria</taxon>
        <taxon>Euarchontoglires</taxon>
        <taxon>Primates</taxon>
        <taxon>Haplorrhini</taxon>
        <taxon>Catarrhini</taxon>
        <taxon>Hominidae</taxon>
        <taxon>Homo</taxon>
    </lineage>
</organism>
<gene>
    <name evidence="37" type="primary">GABARAPL1</name>
    <name type="synonym">GEC1</name>
</gene>
<sequence length="117" mass="14044">MKFQYKEDHPFEYRKKEGEKIRKKYPDRVPVIVEKAPKARVPDLDKRKYLVPSDLTVGQFYFLIRKRIHLRPEDALFFFVNNTIPPTSATMGQLYEDNHEEDYFLYVAYSDESVYGK</sequence>
<evidence type="ECO:0000250" key="1">
    <source>
        <dbReference type="UniProtKB" id="Q0VGK0"/>
    </source>
</evidence>
<evidence type="ECO:0000250" key="2">
    <source>
        <dbReference type="UniProtKB" id="Q8R3R8"/>
    </source>
</evidence>
<evidence type="ECO:0000269" key="3">
    <source>
    </source>
</evidence>
<evidence type="ECO:0000269" key="4">
    <source>
    </source>
</evidence>
<evidence type="ECO:0000269" key="5">
    <source>
    </source>
</evidence>
<evidence type="ECO:0000269" key="6">
    <source>
    </source>
</evidence>
<evidence type="ECO:0000269" key="7">
    <source>
    </source>
</evidence>
<evidence type="ECO:0000269" key="8">
    <source>
    </source>
</evidence>
<evidence type="ECO:0000269" key="9">
    <source>
    </source>
</evidence>
<evidence type="ECO:0000269" key="10">
    <source>
    </source>
</evidence>
<evidence type="ECO:0000269" key="11">
    <source>
    </source>
</evidence>
<evidence type="ECO:0000269" key="12">
    <source>
    </source>
</evidence>
<evidence type="ECO:0000269" key="13">
    <source>
    </source>
</evidence>
<evidence type="ECO:0000269" key="14">
    <source>
    </source>
</evidence>
<evidence type="ECO:0000269" key="15">
    <source>
    </source>
</evidence>
<evidence type="ECO:0000269" key="16">
    <source>
    </source>
</evidence>
<evidence type="ECO:0000269" key="17">
    <source>
    </source>
</evidence>
<evidence type="ECO:0000269" key="18">
    <source>
    </source>
</evidence>
<evidence type="ECO:0000269" key="19">
    <source>
    </source>
</evidence>
<evidence type="ECO:0000269" key="20">
    <source>
    </source>
</evidence>
<evidence type="ECO:0000269" key="21">
    <source>
    </source>
</evidence>
<evidence type="ECO:0000269" key="22">
    <source>
    </source>
</evidence>
<evidence type="ECO:0000269" key="23">
    <source>
    </source>
</evidence>
<evidence type="ECO:0000269" key="24">
    <source>
    </source>
</evidence>
<evidence type="ECO:0000269" key="25">
    <source>
    </source>
</evidence>
<evidence type="ECO:0000269" key="26">
    <source>
    </source>
</evidence>
<evidence type="ECO:0000269" key="27">
    <source>
    </source>
</evidence>
<evidence type="ECO:0000269" key="28">
    <source>
    </source>
</evidence>
<evidence type="ECO:0000269" key="29">
    <source>
    </source>
</evidence>
<evidence type="ECO:0000269" key="30">
    <source>
    </source>
</evidence>
<evidence type="ECO:0000303" key="31">
    <source>
    </source>
</evidence>
<evidence type="ECO:0000303" key="32">
    <source ref="3"/>
</evidence>
<evidence type="ECO:0000305" key="33"/>
<evidence type="ECO:0000305" key="34">
    <source>
    </source>
</evidence>
<evidence type="ECO:0000305" key="35">
    <source>
    </source>
</evidence>
<evidence type="ECO:0000305" key="36">
    <source>
    </source>
</evidence>
<evidence type="ECO:0000312" key="37">
    <source>
        <dbReference type="HGNC" id="HGNC:4068"/>
    </source>
</evidence>
<evidence type="ECO:0007744" key="38">
    <source>
        <dbReference type="PDB" id="5LXH"/>
    </source>
</evidence>
<evidence type="ECO:0007744" key="39">
    <source>
        <dbReference type="PDB" id="5LXI"/>
    </source>
</evidence>
<evidence type="ECO:0007829" key="40">
    <source>
        <dbReference type="PDB" id="6YOO"/>
    </source>
</evidence>
<evidence type="ECO:0007829" key="41">
    <source>
        <dbReference type="PDB" id="7AA9"/>
    </source>
</evidence>
<comment type="function">
    <text evidence="5 7 25 26">Ubiquitin-like modifier that increases cell-surface expression of kappa-type opioid receptor through facilitating anterograde intracellular trafficking of the receptor (PubMed:16431922). Involved in formation of autophagosomal vacuoles (PubMed:20404487). While LC3s are involved in elongation of the phagophore membrane, the GABARAP/GATE-16 subfamily is essential for a later stage in autophagosome maturation (PubMed:20404487). Through its interaction with the reticulophagy receptor TEX264, participates in the remodeling of subdomains of the endoplasmic reticulum into autophagosomes upon nutrient stress, which then fuse with lysosomes for endoplasmic reticulum turnover (PubMed:31006537, PubMed:31006538).</text>
</comment>
<comment type="subunit">
    <text evidence="2 5 6 8 9 10 11 12 15 16 17 18 20 22 25 26 28 30">Interacts with ATG13, OPRK1, RB1CC1 and ULK1 (PubMed:16431922, PubMed:23043107). Interacts with TP53INP1 and TP53INP2 (PubMed:22470510). Directly interacts with SQSTM1 (PubMed:17580304). Interacts with ATG3, ATG7 and MAP15. Interacts with TECPR2 (PubMed:20562859). Interacts with TBC1D5 (PubMed:22354992). Interacts with MAPK15 (PubMed:22948227). Interacts with TRIM5 (PubMed:25127057). Interacts with MEFV and TRIM21 (PubMed:26347139). Interacts with WDFY3 (PubMed:24668264). Interacts with the reticulophagy receptor TEX264 (PubMed:31006537, PubMed:31006538). Interacts with UBA5 (PubMed:26929408). Interacts with KBTBD6 and KBTBD7; the interaction is direct (PubMed:25684205). Interacts with reticulophagy regulators RETREG1, RETREG2 and RETREG3 (PubMed:34338405). Interacts with IRGM (PubMed:29420192). Interacts with DNM2 (PubMed:32315611). Interacts with NCOA4 (via C-terminus) (By similarity).</text>
</comment>
<comment type="subunit">
    <text evidence="19">(Microbial infection) Interacts with Kaposi's sarcoma-associated herpesvirus protein VIRF-1.</text>
</comment>
<comment type="interaction">
    <interactant intactId="EBI-746969">
        <id>Q9H0R8</id>
    </interactant>
    <interactant intactId="EBI-10217765">
        <id>Q8IVF2-2</id>
        <label>AHNAK2</label>
    </interactant>
    <organismsDiffer>false</organismsDiffer>
    <experiments>3</experiments>
</comment>
<comment type="interaction">
    <interactant intactId="EBI-746969">
        <id>Q9H0R8</id>
    </interactant>
    <interactant intactId="EBI-12078468">
        <id>Q8IVF2-3</id>
        <label>AHNAK2</label>
    </interactant>
    <organismsDiffer>false</organismsDiffer>
    <experiments>8</experiments>
</comment>
<comment type="interaction">
    <interactant intactId="EBI-746969">
        <id>Q9H0R8</id>
    </interactant>
    <interactant intactId="EBI-2946739">
        <id>Q9BSB4</id>
        <label>ATG101</label>
    </interactant>
    <organismsDiffer>false</organismsDiffer>
    <experiments>2</experiments>
</comment>
<comment type="interaction">
    <interactant intactId="EBI-746969">
        <id>Q9H0R8</id>
    </interactant>
    <interactant intactId="EBI-2798775">
        <id>O75143</id>
        <label>ATG13</label>
    </interactant>
    <organismsDiffer>false</organismsDiffer>
    <experiments>2</experiments>
</comment>
<comment type="interaction">
    <interactant intactId="EBI-746969">
        <id>Q9H0R8</id>
    </interactant>
    <interactant intactId="EBI-2514077">
        <id>Q2TAZ0</id>
        <label>ATG2A</label>
    </interactant>
    <organismsDiffer>false</organismsDiffer>
    <experiments>3</experiments>
</comment>
<comment type="interaction">
    <interactant intactId="EBI-746969">
        <id>Q9H0R8</id>
    </interactant>
    <interactant intactId="EBI-988094">
        <id>Q9NT62</id>
        <label>ATG3</label>
    </interactant>
    <organismsDiffer>false</organismsDiffer>
    <experiments>3</experiments>
</comment>
<comment type="interaction">
    <interactant intactId="EBI-746969">
        <id>Q9H0R8</id>
    </interactant>
    <interactant intactId="EBI-3044060">
        <id>Q8WYN0</id>
        <label>ATG4A</label>
    </interactant>
    <organismsDiffer>false</organismsDiffer>
    <experiments>6</experiments>
</comment>
<comment type="interaction">
    <interactant intactId="EBI-746969">
        <id>Q9H0R8</id>
    </interactant>
    <interactant intactId="EBI-712014">
        <id>Q9Y4P1</id>
        <label>ATG4B</label>
    </interactant>
    <organismsDiffer>false</organismsDiffer>
    <experiments>12</experiments>
</comment>
<comment type="interaction">
    <interactant intactId="EBI-746969">
        <id>Q9H0R8</id>
    </interactant>
    <interactant intactId="EBI-987834">
        <id>O95352</id>
        <label>ATG7</label>
    </interactant>
    <organismsDiffer>false</organismsDiffer>
    <experiments>6</experiments>
</comment>
<comment type="interaction">
    <interactant intactId="EBI-746969">
        <id>Q9H0R8</id>
    </interactant>
    <interactant intactId="EBI-849893">
        <id>O60238</id>
        <label>BNIP3L</label>
    </interactant>
    <organismsDiffer>false</organismsDiffer>
    <experiments>3</experiments>
</comment>
<comment type="interaction">
    <interactant intactId="EBI-746969">
        <id>Q9H0R8</id>
    </interactant>
    <interactant intactId="EBI-11532900">
        <id>J3KQ12</id>
        <label>BSCL2</label>
    </interactant>
    <organismsDiffer>false</organismsDiffer>
    <experiments>3</experiments>
</comment>
<comment type="interaction">
    <interactant intactId="EBI-746969">
        <id>Q9H0R8</id>
    </interactant>
    <interactant intactId="EBI-721848">
        <id>Q9NW68</id>
        <label>BSDC1</label>
    </interactant>
    <organismsDiffer>false</organismsDiffer>
    <experiments>3</experiments>
</comment>
<comment type="interaction">
    <interactant intactId="EBI-746969">
        <id>Q9H0R8</id>
    </interactant>
    <interactant intactId="EBI-749920">
        <id>Q9P1Z2</id>
        <label>CALCOCO1</label>
    </interactant>
    <organismsDiffer>false</organismsDiffer>
    <experiments>3</experiments>
</comment>
<comment type="interaction">
    <interactant intactId="EBI-746969">
        <id>Q9H0R8</id>
    </interactant>
    <interactant intactId="EBI-739580">
        <id>Q13137</id>
        <label>CALCOCO2</label>
    </interactant>
    <organismsDiffer>false</organismsDiffer>
    <experiments>7</experiments>
</comment>
<comment type="interaction">
    <interactant intactId="EBI-746969">
        <id>Q9H0R8</id>
    </interactant>
    <interactant intactId="EBI-1171113">
        <id>Q14677</id>
        <label>CLINT1</label>
    </interactant>
    <organismsDiffer>false</organismsDiffer>
    <experiments>2</experiments>
</comment>
<comment type="interaction">
    <interactant intactId="EBI-746969">
        <id>Q9H0R8</id>
    </interactant>
    <interactant intactId="EBI-11988027">
        <id>Q9NRI5-2</id>
        <label>DISC1</label>
    </interactant>
    <organismsDiffer>false</organismsDiffer>
    <experiments>3</experiments>
</comment>
<comment type="interaction">
    <interactant intactId="EBI-746969">
        <id>Q9H0R8</id>
    </interactant>
    <interactant intactId="EBI-2946907">
        <id>Q8WXU2</id>
        <label>DNAAF4</label>
    </interactant>
    <organismsDiffer>false</organismsDiffer>
    <experiments>2</experiments>
</comment>
<comment type="interaction">
    <interactant intactId="EBI-746969">
        <id>Q9H0R8</id>
    </interactant>
    <interactant intactId="EBI-349105">
        <id>P63167</id>
        <label>DYNLL1</label>
    </interactant>
    <organismsDiffer>false</organismsDiffer>
    <experiments>3</experiments>
</comment>
<comment type="interaction">
    <interactant intactId="EBI-746969">
        <id>Q9H0R8</id>
    </interactant>
    <interactant intactId="EBI-2946919">
        <id>Q8TF40</id>
        <label>FNIP1</label>
    </interactant>
    <organismsDiffer>false</organismsDiffer>
    <experiments>2</experiments>
</comment>
<comment type="interaction">
    <interactant intactId="EBI-746969">
        <id>Q9H0R8</id>
    </interactant>
    <interactant intactId="EBI-2869338">
        <id>Q9BQS8</id>
        <label>FYCO1</label>
    </interactant>
    <organismsDiffer>false</organismsDiffer>
    <experiments>2</experiments>
</comment>
<comment type="interaction">
    <interactant intactId="EBI-746969">
        <id>Q9H0R8</id>
    </interactant>
    <interactant intactId="EBI-356720">
        <id>P40939</id>
        <label>HADHA</label>
    </interactant>
    <organismsDiffer>false</organismsDiffer>
    <experiments>4</experiments>
</comment>
<comment type="interaction">
    <interactant intactId="EBI-746969">
        <id>Q9H0R8</id>
    </interactant>
    <interactant intactId="EBI-356635">
        <id>P55084</id>
        <label>HADHB</label>
    </interactant>
    <organismsDiffer>false</organismsDiffer>
    <experiments>4</experiments>
</comment>
<comment type="interaction">
    <interactant intactId="EBI-746969">
        <id>Q9H0R8</id>
    </interactant>
    <interactant intactId="EBI-356424">
        <id>O00410</id>
        <label>IPO5</label>
    </interactant>
    <organismsDiffer>false</organismsDiffer>
    <experiments>4</experiments>
</comment>
<comment type="interaction">
    <interactant intactId="EBI-746969">
        <id>Q9H0R8</id>
    </interactant>
    <interactant intactId="EBI-2514778">
        <id>Q86V97</id>
        <label>KBTBD6</label>
    </interactant>
    <organismsDiffer>false</organismsDiffer>
    <experiments>11</experiments>
</comment>
<comment type="interaction">
    <interactant intactId="EBI-746969">
        <id>Q9H0R8</id>
    </interactant>
    <interactant intactId="EBI-473695">
        <id>Q8WVZ9</id>
        <label>KBTBD7</label>
    </interactant>
    <organismsDiffer>false</organismsDiffer>
    <experiments>9</experiments>
</comment>
<comment type="interaction">
    <interactant intactId="EBI-746969">
        <id>Q9H0R8</id>
    </interactant>
    <interactant intactId="EBI-10172290">
        <id>P60409</id>
        <label>KRTAP10-7</label>
    </interactant>
    <organismsDiffer>false</organismsDiffer>
    <experiments>3</experiments>
</comment>
<comment type="interaction">
    <interactant intactId="EBI-746969">
        <id>Q9H0R8</id>
    </interactant>
    <interactant intactId="EBI-10172052">
        <id>P60411</id>
        <label>KRTAP10-9</label>
    </interactant>
    <organismsDiffer>false</organismsDiffer>
    <experiments>3</experiments>
</comment>
<comment type="interaction">
    <interactant intactId="EBI-746969">
        <id>Q9H0R8</id>
    </interactant>
    <interactant intactId="EBI-739657">
        <id>Q9BQD3</id>
        <label>KXD1</label>
    </interactant>
    <organismsDiffer>false</organismsDiffer>
    <experiments>4</experiments>
</comment>
<comment type="interaction">
    <interactant intactId="EBI-746969">
        <id>Q9H0R8</id>
    </interactant>
    <interactant intactId="EBI-8852072">
        <id>Q9UH92-3</id>
        <label>MLX</label>
    </interactant>
    <organismsDiffer>false</organismsDiffer>
    <experiments>3</experiments>
</comment>
<comment type="interaction">
    <interactant intactId="EBI-746969">
        <id>Q9H0R8</id>
    </interactant>
    <interactant intactId="EBI-742698">
        <id>Q14596</id>
        <label>NBR1</label>
    </interactant>
    <organismsDiffer>false</organismsDiffer>
    <experiments>4</experiments>
</comment>
<comment type="interaction">
    <interactant intactId="EBI-746969">
        <id>Q9H0R8</id>
    </interactant>
    <interactant intactId="EBI-80799">
        <id>Q8NI08</id>
        <label>NCOA7</label>
    </interactant>
    <organismsDiffer>false</organismsDiffer>
    <experiments>3</experiments>
</comment>
<comment type="interaction">
    <interactant intactId="EBI-746969">
        <id>Q9H0R8</id>
    </interactant>
    <interactant intactId="EBI-726944">
        <id>P46934</id>
        <label>NEDD4</label>
    </interactant>
    <organismsDiffer>false</organismsDiffer>
    <experiments>6</experiments>
</comment>
<comment type="interaction">
    <interactant intactId="EBI-746969">
        <id>Q9H0R8</id>
    </interactant>
    <interactant intactId="EBI-11980721">
        <id>P46934-3</id>
        <label>NEDD4</label>
    </interactant>
    <organismsDiffer>false</organismsDiffer>
    <experiments>3</experiments>
</comment>
<comment type="interaction">
    <interactant intactId="EBI-746969">
        <id>Q9H0R8</id>
    </interactant>
    <interactant intactId="EBI-1044009">
        <id>Q8TD19</id>
        <label>NEK9</label>
    </interactant>
    <organismsDiffer>false</organismsDiffer>
    <experiments>6</experiments>
</comment>
<comment type="interaction">
    <interactant intactId="EBI-746969">
        <id>Q9H0R8</id>
    </interactant>
    <interactant intactId="EBI-12119652">
        <id>Q12857-2</id>
        <label>NFIA</label>
    </interactant>
    <organismsDiffer>false</organismsDiffer>
    <experiments>3</experiments>
</comment>
<comment type="interaction">
    <interactant intactId="EBI-746969">
        <id>Q9H0R8</id>
    </interactant>
    <interactant intactId="EBI-307133">
        <id>O75323</id>
        <label>NIPSNAP2</label>
    </interactant>
    <organismsDiffer>false</organismsDiffer>
    <experiments>6</experiments>
</comment>
<comment type="interaction">
    <interactant intactId="EBI-746969">
        <id>Q9H0R8</id>
    </interactant>
    <interactant intactId="EBI-2947053">
        <id>Q92636</id>
        <label>NSMAF</label>
    </interactant>
    <organismsDiffer>false</organismsDiffer>
    <experiments>8</experiments>
</comment>
<comment type="interaction">
    <interactant intactId="EBI-746969">
        <id>Q9H0R8</id>
    </interactant>
    <interactant intactId="EBI-925028">
        <id>P41145</id>
        <label>OPRK1</label>
    </interactant>
    <organismsDiffer>false</organismsDiffer>
    <experiments>5</experiments>
</comment>
<comment type="interaction">
    <interactant intactId="EBI-746969">
        <id>Q9H0R8</id>
    </interactant>
    <interactant intactId="EBI-1051317">
        <id>Q9H4L5</id>
        <label>OSBPL3</label>
    </interactant>
    <organismsDiffer>false</organismsDiffer>
    <experiments>3</experiments>
</comment>
<comment type="interaction">
    <interactant intactId="EBI-746969">
        <id>Q9H0R8</id>
    </interactant>
    <interactant intactId="EBI-740845">
        <id>Q96AQ6</id>
        <label>PBXIP1</label>
    </interactant>
    <organismsDiffer>false</organismsDiffer>
    <experiments>3</experiments>
</comment>
<comment type="interaction">
    <interactant intactId="EBI-746969">
        <id>Q9H0R8</id>
    </interactant>
    <interactant intactId="EBI-476431">
        <id>P10644</id>
        <label>PRKAR1A</label>
    </interactant>
    <organismsDiffer>false</organismsDiffer>
    <experiments>2</experiments>
</comment>
<comment type="interaction">
    <interactant intactId="EBI-746969">
        <id>Q9H0R8</id>
    </interactant>
    <interactant intactId="EBI-603350">
        <id>P28070</id>
        <label>PSMB4</label>
    </interactant>
    <organismsDiffer>false</organismsDiffer>
    <experiments>3</experiments>
</comment>
<comment type="interaction">
    <interactant intactId="EBI-746969">
        <id>Q9H0R8</id>
    </interactant>
    <interactant intactId="EBI-18347359">
        <id>Q15256-5</id>
        <label>PTPRR</label>
    </interactant>
    <organismsDiffer>false</organismsDiffer>
    <experiments>3</experiments>
</comment>
<comment type="interaction">
    <interactant intactId="EBI-746969">
        <id>Q9H0R8</id>
    </interactant>
    <interactant intactId="EBI-1057545">
        <id>Q9Y3P9</id>
        <label>RABGAP1</label>
    </interactant>
    <organismsDiffer>false</organismsDiffer>
    <experiments>2</experiments>
</comment>
<comment type="interaction">
    <interactant intactId="EBI-746969">
        <id>Q9H0R8</id>
    </interactant>
    <interactant intactId="EBI-367390">
        <id>Q8WWW0</id>
        <label>RASSF5</label>
    </interactant>
    <organismsDiffer>false</organismsDiffer>
    <experiments>2</experiments>
</comment>
<comment type="interaction">
    <interactant intactId="EBI-746969">
        <id>Q9H0R8</id>
    </interactant>
    <interactant intactId="EBI-356710">
        <id>Q14257</id>
        <label>RCN2</label>
    </interactant>
    <organismsDiffer>false</organismsDiffer>
    <experiments>4</experiments>
</comment>
<comment type="interaction">
    <interactant intactId="EBI-746969">
        <id>Q9H0R8</id>
    </interactant>
    <interactant intactId="EBI-10192441">
        <id>Q86VR2</id>
        <label>RETREG3</label>
    </interactant>
    <organismsDiffer>false</organismsDiffer>
    <experiments>8</experiments>
</comment>
<comment type="interaction">
    <interactant intactId="EBI-746969">
        <id>Q9H0R8</id>
    </interactant>
    <interactant intactId="EBI-352869">
        <id>Q14151</id>
        <label>SAFB2</label>
    </interactant>
    <organismsDiffer>false</organismsDiffer>
    <experiments>2</experiments>
</comment>
<comment type="interaction">
    <interactant intactId="EBI-746969">
        <id>Q9H0R8</id>
    </interactant>
    <interactant intactId="EBI-1380680">
        <id>Q8IZE3</id>
        <label>SCYL3</label>
    </interactant>
    <organismsDiffer>false</organismsDiffer>
    <experiments>3</experiments>
</comment>
<comment type="interaction">
    <interactant intactId="EBI-746969">
        <id>Q9H0R8</id>
    </interactant>
    <interactant intactId="EBI-11959369">
        <id>Q8IZE3-2</id>
        <label>SCYL3</label>
    </interactant>
    <organismsDiffer>false</organismsDiffer>
    <experiments>4</experiments>
</comment>
<comment type="interaction">
    <interactant intactId="EBI-746969">
        <id>Q9H0R8</id>
    </interactant>
    <interactant intactId="EBI-307104">
        <id>Q13501</id>
        <label>SQSTM1</label>
    </interactant>
    <organismsDiffer>false</organismsDiffer>
    <experiments>18</experiments>
</comment>
<comment type="interaction">
    <interactant intactId="EBI-746969">
        <id>Q9H0R8</id>
    </interactant>
    <interactant intactId="EBI-2947137">
        <id>O95210</id>
        <label>STBD1</label>
    </interactant>
    <organismsDiffer>false</organismsDiffer>
    <experiments>11</experiments>
</comment>
<comment type="interaction">
    <interactant intactId="EBI-746969">
        <id>Q9H0R8</id>
    </interactant>
    <interactant intactId="EBI-992580">
        <id>Q13188</id>
        <label>STK3</label>
    </interactant>
    <organismsDiffer>false</organismsDiffer>
    <experiments>2</experiments>
</comment>
<comment type="interaction">
    <interactant intactId="EBI-746969">
        <id>Q9H0R8</id>
    </interactant>
    <interactant intactId="EBI-367376">
        <id>Q13043</id>
        <label>STK4</label>
    </interactant>
    <organismsDiffer>false</organismsDiffer>
    <experiments>2</experiments>
</comment>
<comment type="interaction">
    <interactant intactId="EBI-746969">
        <id>Q9H0R8</id>
    </interactant>
    <interactant intactId="EBI-1053876">
        <id>Q13033-2</id>
        <label>STRN3</label>
    </interactant>
    <organismsDiffer>false</organismsDiffer>
    <experiments>4</experiments>
</comment>
<comment type="interaction">
    <interactant intactId="EBI-746969">
        <id>Q9H0R8</id>
    </interactant>
    <interactant intactId="EBI-529518">
        <id>Q86VP1</id>
        <label>TAX1BP1</label>
    </interactant>
    <organismsDiffer>false</organismsDiffer>
    <experiments>3</experiments>
</comment>
<comment type="interaction">
    <interactant intactId="EBI-746969">
        <id>Q9H0R8</id>
    </interactant>
    <interactant intactId="EBI-1048247">
        <id>Q8TC07</id>
        <label>TBC1D15</label>
    </interactant>
    <organismsDiffer>false</organismsDiffer>
    <experiments>2</experiments>
</comment>
<comment type="interaction">
    <interactant intactId="EBI-746969">
        <id>Q9H0R8</id>
    </interactant>
    <interactant intactId="EBI-11899977">
        <id>Q3MII6</id>
        <label>TBC1D25</label>
    </interactant>
    <organismsDiffer>false</organismsDiffer>
    <experiments>5</experiments>
</comment>
<comment type="interaction">
    <interactant intactId="EBI-746969">
        <id>Q9H0R8</id>
    </interactant>
    <interactant intactId="EBI-2947180">
        <id>Q9UPU7</id>
        <label>TBC1D2B</label>
    </interactant>
    <organismsDiffer>false</organismsDiffer>
    <experiments>5</experiments>
</comment>
<comment type="interaction">
    <interactant intactId="EBI-746969">
        <id>Q9H0R8</id>
    </interactant>
    <interactant intactId="EBI-10217641">
        <id>B9A6K1</id>
        <label>TBC1D5</label>
    </interactant>
    <organismsDiffer>false</organismsDiffer>
    <experiments>3</experiments>
</comment>
<comment type="interaction">
    <interactant intactId="EBI-746969">
        <id>Q9H0R8</id>
    </interactant>
    <interactant intactId="EBI-742381">
        <id>Q92609</id>
        <label>TBC1D5</label>
    </interactant>
    <organismsDiffer>false</organismsDiffer>
    <experiments>6</experiments>
</comment>
<comment type="interaction">
    <interactant intactId="EBI-746969">
        <id>Q9H0R8</id>
    </interactant>
    <interactant intactId="EBI-2946991">
        <id>O15040</id>
        <label>TECPR2</label>
    </interactant>
    <organismsDiffer>false</organismsDiffer>
    <experiments>2</experiments>
</comment>
<comment type="interaction">
    <interactant intactId="EBI-746969">
        <id>Q9H0R8</id>
    </interactant>
    <interactant intactId="EBI-741350">
        <id>Q9BT49</id>
        <label>THAP7</label>
    </interactant>
    <organismsDiffer>false</organismsDiffer>
    <experiments>3</experiments>
</comment>
<comment type="interaction">
    <interactant intactId="EBI-746969">
        <id>Q9H0R8</id>
    </interactant>
    <interactant intactId="EBI-12946715">
        <id>Q0P631</id>
        <label>TMEM131</label>
    </interactant>
    <organismsDiffer>false</organismsDiffer>
    <experiments>5</experiments>
</comment>
<comment type="interaction">
    <interactant intactId="EBI-746969">
        <id>Q9H0R8</id>
    </interactant>
    <interactant intactId="EBI-357849">
        <id>Q15025</id>
        <label>TNIP1</label>
    </interactant>
    <organismsDiffer>false</organismsDiffer>
    <experiments>7</experiments>
</comment>
<comment type="interaction">
    <interactant intactId="EBI-746969">
        <id>Q9H0R8</id>
    </interactant>
    <interactant intactId="EBI-9986117">
        <id>Q96A56</id>
        <label>TP53INP1</label>
    </interactant>
    <organismsDiffer>false</organismsDiffer>
    <experiments>9</experiments>
</comment>
<comment type="interaction">
    <interactant intactId="EBI-746969">
        <id>Q9H0R8</id>
    </interactant>
    <interactant intactId="EBI-747805">
        <id>Q9GZZ9</id>
        <label>UBA5</label>
    </interactant>
    <organismsDiffer>false</organismsDiffer>
    <experiments>2</experiments>
</comment>
<comment type="interaction">
    <interactant intactId="EBI-746969">
        <id>Q9H0R8</id>
    </interactant>
    <interactant intactId="EBI-908831">
        <id>O75385</id>
        <label>ULK1</label>
    </interactant>
    <organismsDiffer>false</organismsDiffer>
    <experiments>3</experiments>
</comment>
<comment type="interaction">
    <interactant intactId="EBI-746969">
        <id>Q9H0R8</id>
    </interactant>
    <interactant intactId="EBI-10989060">
        <id>C9J7I0</id>
        <label>UMAD1</label>
    </interactant>
    <organismsDiffer>false</organismsDiffer>
    <experiments>3</experiments>
</comment>
<comment type="interaction">
    <interactant intactId="EBI-746969">
        <id>Q9H0R8</id>
    </interactant>
    <interactant intactId="EBI-1569256">
        <id>Q8IZQ1</id>
        <label>WDFY3</label>
    </interactant>
    <organismsDiffer>false</organismsDiffer>
    <experiments>3</experiments>
</comment>
<comment type="interaction">
    <interactant intactId="EBI-746969">
        <id>Q9H0R8</id>
    </interactant>
    <interactant intactId="EBI-723574">
        <id>O15209</id>
        <label>ZBTB22</label>
    </interactant>
    <organismsDiffer>false</organismsDiffer>
    <experiments>4</experiments>
</comment>
<comment type="interaction">
    <interactant intactId="EBI-746969">
        <id>Q9H0R8</id>
    </interactant>
    <interactant intactId="EBI-1774669">
        <id>Q9Z2F7</id>
        <label>Bnip3l</label>
    </interactant>
    <organismsDiffer>true</organismsDiffer>
    <experiments>4</experiments>
</comment>
<comment type="subcellular location">
    <subcellularLocation>
        <location evidence="6 7 24 35">Cytoplasmic vesicle</location>
        <location evidence="6 7 24 35">Autophagosome</location>
    </subcellularLocation>
    <subcellularLocation>
        <location evidence="7">Cytoplasmic vesicle membrane</location>
        <topology evidence="7">Lipid-anchor</topology>
    </subcellularLocation>
    <subcellularLocation>
        <location evidence="1">Cytoplasm</location>
        <location evidence="1">Cytoskeleton</location>
    </subcellularLocation>
    <subcellularLocation>
        <location evidence="1">Endoplasmic reticulum</location>
    </subcellularLocation>
    <subcellularLocation>
        <location evidence="1">Golgi apparatus</location>
    </subcellularLocation>
</comment>
<comment type="alternative products">
    <event type="alternative splicing"/>
    <isoform>
        <id>Q9H0R8-1</id>
        <name>1</name>
        <sequence type="displayed"/>
    </isoform>
    <isoform>
        <id>Q9H0R8-2</id>
        <name>2</name>
        <sequence type="described" ref="VSP_044422"/>
    </isoform>
</comment>
<comment type="tissue specificity">
    <text evidence="3 4 14">Ubiquitous. Expressed at very high levels in the brain, heart, peripheral blood leukocytes, liver, kidney, placenta and skeletal muscle. Expressed at very low levels in thymus and small intestine. In the brain, expression is particularly intense in motoneurons in the embryo and in neurons involved in somatomotor and neuroendocrine functions in the adult, particularly in the substantia nigra pars compacta.</text>
</comment>
<comment type="PTM">
    <text evidence="2 7 21 23 24 29">The precursor molecule is cleaved by ATG4 (ATG4A, ATG4B, ATG4C or ATG4D) to expose the glycine at the C-terminus and form the cytosolic form, GABARAPL1-I (PubMed:20404487, PubMed:28287329, PubMed:29458288, PubMed:30661429). The processed form is then activated by APG7L/ATG7, transferred to ATG3 and conjugated to phosphatidylethanolamine (PE) phospholipid to form the membrane-bound form, GABARAPL1-II (PubMed:20404487, PubMed:29458288). During non-canonical autophagy, the processed form is conjugated to phosphatidylserine (PS) phospholipid (PubMed:33909989). ATG4 proteins also mediate the delipidation of PE-conjugated forms required for GABARAPL1 recycling when autophagosomes fuse with lysosomes (PubMed:20404487, PubMed:29458288, PubMed:33909989). In addition, ATG4B and ATG4D mediate delipidation of ATG8 proteins conjugated to PS during non-canonical autophagy (PubMed:33909989). ATG4B constitutes the major protein for proteolytic activation (PubMed:30661429). ATG4D is the main enzyme for delipidation activity (By similarity).</text>
</comment>
<comment type="PTM">
    <text evidence="13 27 29">(Microbial infection) The Legionella effector RavZ is a deconjugating enzyme that hydrolyzes the amide bond between the C-terminal glycine residue and an adjacent aromatic residue in ATG8 proteins conjugated to phosphatidylethanolamine (PE), producing an ATG8 protein that is resistant to reconjugation by the host machinery due to the cleavage of the reactive C-terminal glycine (PubMed:23112293, PubMed:31722778). RavZ is also able to mediate delipidation of ATG8 proteins conjugated to phosphatidylserine (PS) (PubMed:33909989).</text>
</comment>
<comment type="similarity">
    <text evidence="33">Belongs to the ATG8 family.</text>
</comment>
<reference key="1">
    <citation type="journal article" date="2001" name="Biochem. Biophys. Res. Commun.">
        <title>A novel early estrogen-regulated gene gec1 encodes a protein related to GABARAP.</title>
        <authorList>
            <person name="Vernier-Magnin S."/>
            <person name="Muller S."/>
            <person name="Sallot M."/>
            <person name="Radom J."/>
            <person name="Musard J.-F."/>
            <person name="Adami P."/>
            <person name="Dulieu P."/>
            <person name="Remy-Martin J.-P."/>
            <person name="Jouvenot M."/>
            <person name="Fraichard A."/>
        </authorList>
    </citation>
    <scope>NUCLEOTIDE SEQUENCE [MRNA] (ISOFORM 1)</scope>
    <scope>TISSUE SPECIFICITY</scope>
    <source>
        <tissue>Placenta</tissue>
    </source>
</reference>
<reference key="2">
    <citation type="journal article" date="2001" name="Genomics">
        <title>Cloning, expression patterns, and chromosome localization of three human and two mouse homologues of GABA(A) receptor-associated protein.</title>
        <authorList>
            <person name="Xin Y."/>
            <person name="Yu L."/>
            <person name="Chen Z."/>
            <person name="Zheng L."/>
            <person name="Fu Q."/>
            <person name="Jiang J."/>
            <person name="Zhang P."/>
            <person name="Gong R."/>
            <person name="Zhao S."/>
        </authorList>
    </citation>
    <scope>NUCLEOTIDE SEQUENCE [MRNA] (ISOFORM 1)</scope>
    <scope>TISSUE SPECIFICITY</scope>
</reference>
<reference key="3">
    <citation type="submission" date="2011-09" db="EMBL/GenBank/DDBJ databases">
        <title>Alternative splicing pattern analysis of human Atg8 family proteins.</title>
        <authorList>
            <person name="Liu C."/>
            <person name="Yu L."/>
        </authorList>
    </citation>
    <scope>NUCLEOTIDE SEQUENCE [MRNA] (ISOFORM 2)</scope>
</reference>
<reference key="4">
    <citation type="journal article" date="2001" name="Genome Res.">
        <title>Towards a catalog of human genes and proteins: sequencing and analysis of 500 novel complete protein coding human cDNAs.</title>
        <authorList>
            <person name="Wiemann S."/>
            <person name="Weil B."/>
            <person name="Wellenreuther R."/>
            <person name="Gassenhuber J."/>
            <person name="Glassl S."/>
            <person name="Ansorge W."/>
            <person name="Boecher M."/>
            <person name="Bloecker H."/>
            <person name="Bauersachs S."/>
            <person name="Blum H."/>
            <person name="Lauber J."/>
            <person name="Duesterhoeft A."/>
            <person name="Beyer A."/>
            <person name="Koehrer K."/>
            <person name="Strack N."/>
            <person name="Mewes H.-W."/>
            <person name="Ottenwaelder B."/>
            <person name="Obermaier B."/>
            <person name="Tampe J."/>
            <person name="Heubner D."/>
            <person name="Wambutt R."/>
            <person name="Korn B."/>
            <person name="Klein M."/>
            <person name="Poustka A."/>
        </authorList>
    </citation>
    <scope>NUCLEOTIDE SEQUENCE [LARGE SCALE MRNA] (ISOFORM 1)</scope>
    <source>
        <tissue>Brain</tissue>
    </source>
</reference>
<reference key="5">
    <citation type="journal article" date="2004" name="Nat. Genet.">
        <title>Complete sequencing and characterization of 21,243 full-length human cDNAs.</title>
        <authorList>
            <person name="Ota T."/>
            <person name="Suzuki Y."/>
            <person name="Nishikawa T."/>
            <person name="Otsuki T."/>
            <person name="Sugiyama T."/>
            <person name="Irie R."/>
            <person name="Wakamatsu A."/>
            <person name="Hayashi K."/>
            <person name="Sato H."/>
            <person name="Nagai K."/>
            <person name="Kimura K."/>
            <person name="Makita H."/>
            <person name="Sekine M."/>
            <person name="Obayashi M."/>
            <person name="Nishi T."/>
            <person name="Shibahara T."/>
            <person name="Tanaka T."/>
            <person name="Ishii S."/>
            <person name="Yamamoto J."/>
            <person name="Saito K."/>
            <person name="Kawai Y."/>
            <person name="Isono Y."/>
            <person name="Nakamura Y."/>
            <person name="Nagahari K."/>
            <person name="Murakami K."/>
            <person name="Yasuda T."/>
            <person name="Iwayanagi T."/>
            <person name="Wagatsuma M."/>
            <person name="Shiratori A."/>
            <person name="Sudo H."/>
            <person name="Hosoiri T."/>
            <person name="Kaku Y."/>
            <person name="Kodaira H."/>
            <person name="Kondo H."/>
            <person name="Sugawara M."/>
            <person name="Takahashi M."/>
            <person name="Kanda K."/>
            <person name="Yokoi T."/>
            <person name="Furuya T."/>
            <person name="Kikkawa E."/>
            <person name="Omura Y."/>
            <person name="Abe K."/>
            <person name="Kamihara K."/>
            <person name="Katsuta N."/>
            <person name="Sato K."/>
            <person name="Tanikawa M."/>
            <person name="Yamazaki M."/>
            <person name="Ninomiya K."/>
            <person name="Ishibashi T."/>
            <person name="Yamashita H."/>
            <person name="Murakawa K."/>
            <person name="Fujimori K."/>
            <person name="Tanai H."/>
            <person name="Kimata M."/>
            <person name="Watanabe M."/>
            <person name="Hiraoka S."/>
            <person name="Chiba Y."/>
            <person name="Ishida S."/>
            <person name="Ono Y."/>
            <person name="Takiguchi S."/>
            <person name="Watanabe S."/>
            <person name="Yosida M."/>
            <person name="Hotuta T."/>
            <person name="Kusano J."/>
            <person name="Kanehori K."/>
            <person name="Takahashi-Fujii A."/>
            <person name="Hara H."/>
            <person name="Tanase T.-O."/>
            <person name="Nomura Y."/>
            <person name="Togiya S."/>
            <person name="Komai F."/>
            <person name="Hara R."/>
            <person name="Takeuchi K."/>
            <person name="Arita M."/>
            <person name="Imose N."/>
            <person name="Musashino K."/>
            <person name="Yuuki H."/>
            <person name="Oshima A."/>
            <person name="Sasaki N."/>
            <person name="Aotsuka S."/>
            <person name="Yoshikawa Y."/>
            <person name="Matsunawa H."/>
            <person name="Ichihara T."/>
            <person name="Shiohata N."/>
            <person name="Sano S."/>
            <person name="Moriya S."/>
            <person name="Momiyama H."/>
            <person name="Satoh N."/>
            <person name="Takami S."/>
            <person name="Terashima Y."/>
            <person name="Suzuki O."/>
            <person name="Nakagawa S."/>
            <person name="Senoh A."/>
            <person name="Mizoguchi H."/>
            <person name="Goto Y."/>
            <person name="Shimizu F."/>
            <person name="Wakebe H."/>
            <person name="Hishigaki H."/>
            <person name="Watanabe T."/>
            <person name="Sugiyama A."/>
            <person name="Takemoto M."/>
            <person name="Kawakami B."/>
            <person name="Yamazaki M."/>
            <person name="Watanabe K."/>
            <person name="Kumagai A."/>
            <person name="Itakura S."/>
            <person name="Fukuzumi Y."/>
            <person name="Fujimori Y."/>
            <person name="Komiyama M."/>
            <person name="Tashiro H."/>
            <person name="Tanigami A."/>
            <person name="Fujiwara T."/>
            <person name="Ono T."/>
            <person name="Yamada K."/>
            <person name="Fujii Y."/>
            <person name="Ozaki K."/>
            <person name="Hirao M."/>
            <person name="Ohmori Y."/>
            <person name="Kawabata A."/>
            <person name="Hikiji T."/>
            <person name="Kobatake N."/>
            <person name="Inagaki H."/>
            <person name="Ikema Y."/>
            <person name="Okamoto S."/>
            <person name="Okitani R."/>
            <person name="Kawakami T."/>
            <person name="Noguchi S."/>
            <person name="Itoh T."/>
            <person name="Shigeta K."/>
            <person name="Senba T."/>
            <person name="Matsumura K."/>
            <person name="Nakajima Y."/>
            <person name="Mizuno T."/>
            <person name="Morinaga M."/>
            <person name="Sasaki M."/>
            <person name="Togashi T."/>
            <person name="Oyama M."/>
            <person name="Hata H."/>
            <person name="Watanabe M."/>
            <person name="Komatsu T."/>
            <person name="Mizushima-Sugano J."/>
            <person name="Satoh T."/>
            <person name="Shirai Y."/>
            <person name="Takahashi Y."/>
            <person name="Nakagawa K."/>
            <person name="Okumura K."/>
            <person name="Nagase T."/>
            <person name="Nomura N."/>
            <person name="Kikuchi H."/>
            <person name="Masuho Y."/>
            <person name="Yamashita R."/>
            <person name="Nakai K."/>
            <person name="Yada T."/>
            <person name="Nakamura Y."/>
            <person name="Ohara O."/>
            <person name="Isogai T."/>
            <person name="Sugano S."/>
        </authorList>
    </citation>
    <scope>NUCLEOTIDE SEQUENCE [LARGE SCALE MRNA] (ISOFORM 2)</scope>
    <source>
        <tissue>Thymus</tissue>
    </source>
</reference>
<reference key="6">
    <citation type="submission" date="2004-06" db="EMBL/GenBank/DDBJ databases">
        <title>Cloning of human full open reading frames in Gateway(TM) system entry vector (pDONR201).</title>
        <authorList>
            <person name="Ebert L."/>
            <person name="Schick M."/>
            <person name="Neubert P."/>
            <person name="Schatten R."/>
            <person name="Henze S."/>
            <person name="Korn B."/>
        </authorList>
    </citation>
    <scope>NUCLEOTIDE SEQUENCE [LARGE SCALE MRNA] (ISOFORM 1)</scope>
</reference>
<reference key="7">
    <citation type="journal article" date="2006" name="Nature">
        <title>The finished DNA sequence of human chromosome 12.</title>
        <authorList>
            <person name="Scherer S.E."/>
            <person name="Muzny D.M."/>
            <person name="Buhay C.J."/>
            <person name="Chen R."/>
            <person name="Cree A."/>
            <person name="Ding Y."/>
            <person name="Dugan-Rocha S."/>
            <person name="Gill R."/>
            <person name="Gunaratne P."/>
            <person name="Harris R.A."/>
            <person name="Hawes A.C."/>
            <person name="Hernandez J."/>
            <person name="Hodgson A.V."/>
            <person name="Hume J."/>
            <person name="Jackson A."/>
            <person name="Khan Z.M."/>
            <person name="Kovar-Smith C."/>
            <person name="Lewis L.R."/>
            <person name="Lozado R.J."/>
            <person name="Metzker M.L."/>
            <person name="Milosavljevic A."/>
            <person name="Miner G.R."/>
            <person name="Montgomery K.T."/>
            <person name="Morgan M.B."/>
            <person name="Nazareth L.V."/>
            <person name="Scott G."/>
            <person name="Sodergren E."/>
            <person name="Song X.-Z."/>
            <person name="Steffen D."/>
            <person name="Lovering R.C."/>
            <person name="Wheeler D.A."/>
            <person name="Worley K.C."/>
            <person name="Yuan Y."/>
            <person name="Zhang Z."/>
            <person name="Adams C.Q."/>
            <person name="Ansari-Lari M.A."/>
            <person name="Ayele M."/>
            <person name="Brown M.J."/>
            <person name="Chen G."/>
            <person name="Chen Z."/>
            <person name="Clerc-Blankenburg K.P."/>
            <person name="Davis C."/>
            <person name="Delgado O."/>
            <person name="Dinh H.H."/>
            <person name="Draper H."/>
            <person name="Gonzalez-Garay M.L."/>
            <person name="Havlak P."/>
            <person name="Jackson L.R."/>
            <person name="Jacob L.S."/>
            <person name="Kelly S.H."/>
            <person name="Li L."/>
            <person name="Li Z."/>
            <person name="Liu J."/>
            <person name="Liu W."/>
            <person name="Lu J."/>
            <person name="Maheshwari M."/>
            <person name="Nguyen B.-V."/>
            <person name="Okwuonu G.O."/>
            <person name="Pasternak S."/>
            <person name="Perez L.M."/>
            <person name="Plopper F.J.H."/>
            <person name="Santibanez J."/>
            <person name="Shen H."/>
            <person name="Tabor P.E."/>
            <person name="Verduzco D."/>
            <person name="Waldron L."/>
            <person name="Wang Q."/>
            <person name="Williams G.A."/>
            <person name="Zhang J."/>
            <person name="Zhou J."/>
            <person name="Allen C.C."/>
            <person name="Amin A.G."/>
            <person name="Anyalebechi V."/>
            <person name="Bailey M."/>
            <person name="Barbaria J.A."/>
            <person name="Bimage K.E."/>
            <person name="Bryant N.P."/>
            <person name="Burch P.E."/>
            <person name="Burkett C.E."/>
            <person name="Burrell K.L."/>
            <person name="Calderon E."/>
            <person name="Cardenas V."/>
            <person name="Carter K."/>
            <person name="Casias K."/>
            <person name="Cavazos I."/>
            <person name="Cavazos S.R."/>
            <person name="Ceasar H."/>
            <person name="Chacko J."/>
            <person name="Chan S.N."/>
            <person name="Chavez D."/>
            <person name="Christopoulos C."/>
            <person name="Chu J."/>
            <person name="Cockrell R."/>
            <person name="Cox C.D."/>
            <person name="Dang M."/>
            <person name="Dathorne S.R."/>
            <person name="David R."/>
            <person name="Davis C.M."/>
            <person name="Davy-Carroll L."/>
            <person name="Deshazo D.R."/>
            <person name="Donlin J.E."/>
            <person name="D'Souza L."/>
            <person name="Eaves K.A."/>
            <person name="Egan A."/>
            <person name="Emery-Cohen A.J."/>
            <person name="Escotto M."/>
            <person name="Flagg N."/>
            <person name="Forbes L.D."/>
            <person name="Gabisi A.M."/>
            <person name="Garza M."/>
            <person name="Hamilton C."/>
            <person name="Henderson N."/>
            <person name="Hernandez O."/>
            <person name="Hines S."/>
            <person name="Hogues M.E."/>
            <person name="Huang M."/>
            <person name="Idlebird D.G."/>
            <person name="Johnson R."/>
            <person name="Jolivet A."/>
            <person name="Jones S."/>
            <person name="Kagan R."/>
            <person name="King L.M."/>
            <person name="Leal B."/>
            <person name="Lebow H."/>
            <person name="Lee S."/>
            <person name="LeVan J.M."/>
            <person name="Lewis L.C."/>
            <person name="London P."/>
            <person name="Lorensuhewa L.M."/>
            <person name="Loulseged H."/>
            <person name="Lovett D.A."/>
            <person name="Lucier A."/>
            <person name="Lucier R.L."/>
            <person name="Ma J."/>
            <person name="Madu R.C."/>
            <person name="Mapua P."/>
            <person name="Martindale A.D."/>
            <person name="Martinez E."/>
            <person name="Massey E."/>
            <person name="Mawhiney S."/>
            <person name="Meador M.G."/>
            <person name="Mendez S."/>
            <person name="Mercado C."/>
            <person name="Mercado I.C."/>
            <person name="Merritt C.E."/>
            <person name="Miner Z.L."/>
            <person name="Minja E."/>
            <person name="Mitchell T."/>
            <person name="Mohabbat F."/>
            <person name="Mohabbat K."/>
            <person name="Montgomery B."/>
            <person name="Moore N."/>
            <person name="Morris S."/>
            <person name="Munidasa M."/>
            <person name="Ngo R.N."/>
            <person name="Nguyen N.B."/>
            <person name="Nickerson E."/>
            <person name="Nwaokelemeh O.O."/>
            <person name="Nwokenkwo S."/>
            <person name="Obregon M."/>
            <person name="Oguh M."/>
            <person name="Oragunye N."/>
            <person name="Oviedo R.J."/>
            <person name="Parish B.J."/>
            <person name="Parker D.N."/>
            <person name="Parrish J."/>
            <person name="Parks K.L."/>
            <person name="Paul H.A."/>
            <person name="Payton B.A."/>
            <person name="Perez A."/>
            <person name="Perrin W."/>
            <person name="Pickens A."/>
            <person name="Primus E.L."/>
            <person name="Pu L.-L."/>
            <person name="Puazo M."/>
            <person name="Quiles M.M."/>
            <person name="Quiroz J.B."/>
            <person name="Rabata D."/>
            <person name="Reeves K."/>
            <person name="Ruiz S.J."/>
            <person name="Shao H."/>
            <person name="Sisson I."/>
            <person name="Sonaike T."/>
            <person name="Sorelle R.P."/>
            <person name="Sutton A.E."/>
            <person name="Svatek A.F."/>
            <person name="Svetz L.A."/>
            <person name="Tamerisa K.S."/>
            <person name="Taylor T.R."/>
            <person name="Teague B."/>
            <person name="Thomas N."/>
            <person name="Thorn R.D."/>
            <person name="Trejos Z.Y."/>
            <person name="Trevino B.K."/>
            <person name="Ukegbu O.N."/>
            <person name="Urban J.B."/>
            <person name="Vasquez L.I."/>
            <person name="Vera V.A."/>
            <person name="Villasana D.M."/>
            <person name="Wang L."/>
            <person name="Ward-Moore S."/>
            <person name="Warren J.T."/>
            <person name="Wei X."/>
            <person name="White F."/>
            <person name="Williamson A.L."/>
            <person name="Wleczyk R."/>
            <person name="Wooden H.S."/>
            <person name="Wooden S.H."/>
            <person name="Yen J."/>
            <person name="Yoon L."/>
            <person name="Yoon V."/>
            <person name="Zorrilla S.E."/>
            <person name="Nelson D."/>
            <person name="Kucherlapati R."/>
            <person name="Weinstock G."/>
            <person name="Gibbs R.A."/>
        </authorList>
    </citation>
    <scope>NUCLEOTIDE SEQUENCE [LARGE SCALE GENOMIC DNA]</scope>
</reference>
<reference key="8">
    <citation type="submission" date="2005-07" db="EMBL/GenBank/DDBJ databases">
        <authorList>
            <person name="Mural R.J."/>
            <person name="Istrail S."/>
            <person name="Sutton G.G."/>
            <person name="Florea L."/>
            <person name="Halpern A.L."/>
            <person name="Mobarry C.M."/>
            <person name="Lippert R."/>
            <person name="Walenz B."/>
            <person name="Shatkay H."/>
            <person name="Dew I."/>
            <person name="Miller J.R."/>
            <person name="Flanigan M.J."/>
            <person name="Edwards N.J."/>
            <person name="Bolanos R."/>
            <person name="Fasulo D."/>
            <person name="Halldorsson B.V."/>
            <person name="Hannenhalli S."/>
            <person name="Turner R."/>
            <person name="Yooseph S."/>
            <person name="Lu F."/>
            <person name="Nusskern D.R."/>
            <person name="Shue B.C."/>
            <person name="Zheng X.H."/>
            <person name="Zhong F."/>
            <person name="Delcher A.L."/>
            <person name="Huson D.H."/>
            <person name="Kravitz S.A."/>
            <person name="Mouchard L."/>
            <person name="Reinert K."/>
            <person name="Remington K.A."/>
            <person name="Clark A.G."/>
            <person name="Waterman M.S."/>
            <person name="Eichler E.E."/>
            <person name="Adams M.D."/>
            <person name="Hunkapiller M.W."/>
            <person name="Myers E.W."/>
            <person name="Venter J.C."/>
        </authorList>
    </citation>
    <scope>NUCLEOTIDE SEQUENCE [LARGE SCALE GENOMIC DNA]</scope>
</reference>
<reference key="9">
    <citation type="journal article" date="2004" name="Genome Res.">
        <title>The status, quality, and expansion of the NIH full-length cDNA project: the Mammalian Gene Collection (MGC).</title>
        <authorList>
            <consortium name="The MGC Project Team"/>
        </authorList>
    </citation>
    <scope>NUCLEOTIDE SEQUENCE [LARGE SCALE MRNA] (ISOFORM 1)</scope>
    <source>
        <tissue>Brain</tissue>
        <tissue>Colon</tissue>
    </source>
</reference>
<reference key="10">
    <citation type="journal article" date="2006" name="J. Biol. Chem.">
        <title>GEC1 interacts with the kappa opioid receptor and enhances expression of the receptor.</title>
        <authorList>
            <person name="Chen C."/>
            <person name="Li J.-G."/>
            <person name="Chen Y."/>
            <person name="Huang P."/>
            <person name="Wang Y."/>
            <person name="Liu-Chen L.-Y."/>
        </authorList>
    </citation>
    <scope>FUNCTION</scope>
    <scope>INTERACTION WITH OPRK1</scope>
</reference>
<reference key="11">
    <citation type="journal article" date="2007" name="J. Biol. Chem.">
        <title>p62/SQSTM1 binds directly to Atg8/LC3 to facilitate degradation of ubiquitinated protein aggregates by autophagy.</title>
        <authorList>
            <person name="Pankiv S."/>
            <person name="Clausen T.H."/>
            <person name="Lamark T."/>
            <person name="Brech A."/>
            <person name="Bruun J.A."/>
            <person name="Outzen H."/>
            <person name="Overvatn A."/>
            <person name="Bjorkoy G."/>
            <person name="Johansen T."/>
        </authorList>
    </citation>
    <scope>INTERACTION WITH SQSTM1</scope>
    <scope>SUBCELLULAR LOCATION</scope>
</reference>
<reference key="12">
    <citation type="journal article" date="2010" name="Autophagy">
        <title>GABARAPL1 (GEC1) associates with autophagic vesicles.</title>
        <authorList>
            <person name="Chakrama F.Z."/>
            <person name="Seguin-Py S."/>
            <person name="Le Grand J.N."/>
            <person name="Fraichard A."/>
            <person name="Delage-Mourroux R."/>
            <person name="Despouy G."/>
            <person name="Perez V."/>
            <person name="Jouvenot M."/>
            <person name="Boyer-Guittaut M."/>
        </authorList>
    </citation>
    <scope>FUNCTION</scope>
    <scope>SUBCELLULAR LOCATION</scope>
    <scope>PROTEOLYTIC CLEAVAGE</scope>
    <scope>LIPIDATION AT GLY-116</scope>
    <scope>MUTAGENESIS OF GLY-116</scope>
</reference>
<reference key="13">
    <citation type="journal article" date="2010" name="Nature">
        <title>Network organization of the human autophagy system.</title>
        <authorList>
            <person name="Behrends C."/>
            <person name="Sowa M.E."/>
            <person name="Gygi S.P."/>
            <person name="Harper J.W."/>
        </authorList>
    </citation>
    <scope>INTERACTION WITH TECPR2</scope>
</reference>
<reference key="14">
    <citation type="journal article" date="2011" name="BMC Syst. Biol.">
        <title>Initial characterization of the human central proteome.</title>
        <authorList>
            <person name="Burkard T.R."/>
            <person name="Planyavsky M."/>
            <person name="Kaupe I."/>
            <person name="Breitwieser F.P."/>
            <person name="Buerckstuemmer T."/>
            <person name="Bennett K.L."/>
            <person name="Superti-Furga G."/>
            <person name="Colinge J."/>
        </authorList>
    </citation>
    <scope>IDENTIFICATION BY MASS SPECTROMETRY [LARGE SCALE ANALYSIS]</scope>
</reference>
<reference key="15">
    <citation type="journal article" date="2012" name="Autophagy">
        <title>MAPK15/ERK8 stimulates autophagy by interacting with LC3 and GABARAP proteins.</title>
        <authorList>
            <person name="Colecchia D."/>
            <person name="Strambi A."/>
            <person name="Sanzone S."/>
            <person name="Iavarone C."/>
            <person name="Rossi M."/>
            <person name="Dall'Armi C."/>
            <person name="Piccioni F."/>
            <person name="Verrotti di Pianella A."/>
            <person name="Chiariello M."/>
        </authorList>
    </citation>
    <scope>INTERACTION WITH MAPK15</scope>
</reference>
<reference key="16">
    <citation type="journal article" date="2012" name="J. Biol. Chem.">
        <title>ATG8 family proteins act as scaffolds for assembly of the ULK complex: sequence requirements for LC3-interacting region (LIR) motifs.</title>
        <authorList>
            <person name="Alemu E.A."/>
            <person name="Lamark T."/>
            <person name="Torgersen K.M."/>
            <person name="Birgisdottir A.B."/>
            <person name="Larsen K.B."/>
            <person name="Jain A."/>
            <person name="Olsvik H."/>
            <person name="Overvatn A."/>
            <person name="Kirkin V."/>
            <person name="Johansen T."/>
        </authorList>
    </citation>
    <scope>INTERACTION WITH ATG13; RB1CC1 AND ULK1</scope>
</reference>
<reference key="17">
    <citation type="journal article" date="2012" name="Mol. Cell. Biol.">
        <title>Rab GTPase-activating proteins in autophagy: regulation of endocytic and autophagy pathways by direct binding to human ATG8 modifiers.</title>
        <authorList>
            <person name="Popovic D."/>
            <person name="Akutsu M."/>
            <person name="Novak I."/>
            <person name="Harper J.W."/>
            <person name="Behrends C."/>
            <person name="Dikic I."/>
        </authorList>
    </citation>
    <scope>INTERACTION WITH TBC1D5</scope>
</reference>
<reference key="18">
    <citation type="journal article" date="2012" name="PLoS ONE">
        <title>DOR/Tp53inp2 and Tp53inp1 constitute a metazoan gene family encoding dual regulators of autophagy and transcription.</title>
        <authorList>
            <person name="Sancho A."/>
            <person name="Duran J."/>
            <person name="Garcia-Espana A."/>
            <person name="Mauvezin C."/>
            <person name="Alemu E.A."/>
            <person name="Lamark T."/>
            <person name="Macias M.J."/>
            <person name="Desalle R."/>
            <person name="Royo M."/>
            <person name="Sala D."/>
            <person name="Chicote J.U."/>
            <person name="Palacin M."/>
            <person name="Johansen T."/>
            <person name="Zorzano A."/>
        </authorList>
    </citation>
    <scope>INTERACTION WITH TP53INP1 AND TP53INP2</scope>
</reference>
<reference key="19">
    <citation type="journal article" date="2012" name="Science">
        <title>The Legionella effector RavZ inhibits host autophagy through irreversible Atg8 deconjugation.</title>
        <authorList>
            <person name="Choy A."/>
            <person name="Dancourt J."/>
            <person name="Mugo B."/>
            <person name="O'Connor T.J."/>
            <person name="Isberg R.R."/>
            <person name="Melia T.J."/>
            <person name="Roy C.R."/>
        </authorList>
    </citation>
    <scope>DECONJUGATION BY LEGIONELLA RAVZ (MICROBIAL INFECTION)</scope>
</reference>
<reference key="20">
    <citation type="journal article" date="2013" name="PLoS ONE">
        <title>Specific distribution of the autophagic protein GABARAPL1/GEC1 in the developing and adult mouse brain and identification of neuronal populations expressing GABARAPL1/GEC1.</title>
        <authorList>
            <person name="Le Grand J.N."/>
            <person name="Bon K."/>
            <person name="Fraichard A."/>
            <person name="Zhang J."/>
            <person name="Jouvenot M."/>
            <person name="Risold P.Y."/>
            <person name="Boyer-Guittaut M."/>
            <person name="Delage-Mourroux R."/>
        </authorList>
    </citation>
    <scope>SUBCELLULAR LOCATION</scope>
    <scope>TISSUE SPECIFICITY</scope>
</reference>
<reference key="21">
    <citation type="journal article" date="2014" name="Dev. Cell">
        <title>TRIM proteins regulate autophagy and can target autophagic substrates by direct recognition.</title>
        <authorList>
            <person name="Mandell M.A."/>
            <person name="Jain A."/>
            <person name="Arko-Mensah J."/>
            <person name="Chauhan S."/>
            <person name="Kimura T."/>
            <person name="Dinkins C."/>
            <person name="Silvestri G."/>
            <person name="Munch J."/>
            <person name="Kirchhoff F."/>
            <person name="Simonsen A."/>
            <person name="Wei Y."/>
            <person name="Levine B."/>
            <person name="Johansen T."/>
            <person name="Deretic V."/>
        </authorList>
    </citation>
    <scope>INTERACTION WITH TRIM5</scope>
</reference>
<reference key="22">
    <citation type="journal article" date="2014" name="EMBO Rep.">
        <title>Structural determinants in GABARAP required for the selective binding and recruitment of ALFY to LC3B-positive structures.</title>
        <authorList>
            <person name="Lystad A.H."/>
            <person name="Ichimura Y."/>
            <person name="Takagi K."/>
            <person name="Yang Y."/>
            <person name="Pankiv S."/>
            <person name="Kanegae Y."/>
            <person name="Kageyama S."/>
            <person name="Suzuki M."/>
            <person name="Saito I."/>
            <person name="Mizushima T."/>
            <person name="Komatsu M."/>
            <person name="Simonsen A."/>
        </authorList>
    </citation>
    <scope>INTERACTION WITH WDFY3</scope>
</reference>
<reference key="23">
    <citation type="journal article" date="2015" name="J. Cell Biol.">
        <title>TRIM-mediated precision autophagy targets cytoplasmic regulators of innate immunity.</title>
        <authorList>
            <person name="Kimura T."/>
            <person name="Jain A."/>
            <person name="Choi S.W."/>
            <person name="Mandell M.A."/>
            <person name="Schroder K."/>
            <person name="Johansen T."/>
            <person name="Deretic V."/>
        </authorList>
    </citation>
    <scope>INTERACTION WITH MEFV AND TRIM21</scope>
</reference>
<reference key="24">
    <citation type="journal article" date="2015" name="J. Virol.">
        <title>Kaposi's Sarcoma-Associated Herpesvirus Viral Interferon Regulatory Factor 1 Interacts with a Member of the Interferon-Stimulated Gene 15 Pathway.</title>
        <authorList>
            <person name="Jacobs S.R."/>
            <person name="Stopford C.M."/>
            <person name="West J.A."/>
            <person name="Bennett C.L."/>
            <person name="Giffin L."/>
            <person name="Damania B."/>
        </authorList>
    </citation>
    <scope>INTERACTION WITH KAPOSI'S SARCOMA-ASSOCIATED HERPESVIRUS PROTEIN VIRF-1 (MICROBIAL INFECTION)</scope>
</reference>
<reference key="25">
    <citation type="journal article" date="2015" name="Mol. Cell">
        <title>CUL3-KBTBD6/KBTBD7 ubiquitin ligase cooperates with GABARAP proteins to spatially restrict TIAM1-RAC1 signaling.</title>
        <authorList>
            <person name="Genau H.M."/>
            <person name="Huber J."/>
            <person name="Baschieri F."/>
            <person name="Akutsu M."/>
            <person name="Doetsch V."/>
            <person name="Farhan H."/>
            <person name="Rogov V."/>
            <person name="Behrends C."/>
        </authorList>
    </citation>
    <scope>INTERACTION WITH KBTBD6 AND KBTBD7</scope>
</reference>
<reference key="26">
    <citation type="journal article" date="2016" name="J. Biol. Chem.">
        <title>Structural and functional analysis of a novel interaction motif within UFM1-activating enzyme 5 (UBA5) required for binding to ubiquitin-like proteins and ufmylation.</title>
        <authorList>
            <person name="Habisov S."/>
            <person name="Huber J."/>
            <person name="Ichimura Y."/>
            <person name="Akutsu M."/>
            <person name="Rogova N."/>
            <person name="Loehr F."/>
            <person name="McEwan D.G."/>
            <person name="Johansen T."/>
            <person name="Dikic I."/>
            <person name="Doetsch V."/>
            <person name="Komatsu M."/>
            <person name="Rogov V.V."/>
            <person name="Kirkin V."/>
        </authorList>
    </citation>
    <scope>INTERACTION WITH UBA5</scope>
</reference>
<reference key="27">
    <citation type="journal article" date="2018" name="Autophagy">
        <title>Delipidation of mammalian Atg8-family proteins by each of the four ATG4 proteases.</title>
        <authorList>
            <person name="Kauffman K.J."/>
            <person name="Yu S."/>
            <person name="Jin J."/>
            <person name="Mugo B."/>
            <person name="Nguyen N."/>
            <person name="O'Brien A."/>
            <person name="Nag S."/>
            <person name="Lystad A.H."/>
            <person name="Melia T.J."/>
        </authorList>
    </citation>
    <scope>PROTEOLYTIC CLEAVAGE</scope>
    <scope>DELIPIDATION</scope>
    <scope>LIPIDATION AT GLY-116</scope>
</reference>
<reference key="28">
    <citation type="journal article" date="2018" name="J. Cell Biol.">
        <title>Mechanism of Stx17 recruitment to autophagosomes via IRGM and mammalian Atg8 proteins.</title>
        <authorList>
            <person name="Kumar S."/>
            <person name="Jain A."/>
            <person name="Farzam F."/>
            <person name="Jia J."/>
            <person name="Gu Y."/>
            <person name="Choi S.W."/>
            <person name="Mudd M.H."/>
            <person name="Claude-Taupin A."/>
            <person name="Wester M.J."/>
            <person name="Lidke K.A."/>
            <person name="Rusten T.E."/>
            <person name="Deretic V."/>
        </authorList>
    </citation>
    <scope>INTERACTION WITH IRGM</scope>
</reference>
<reference key="29">
    <citation type="journal article" date="2019" name="Autophagy">
        <title>Redundancy of human ATG4 protease isoforms in autophagy and LC3/GABARAP processing revealed in cells.</title>
        <authorList>
            <person name="Agrotis A."/>
            <person name="Pengo N."/>
            <person name="Burden J.J."/>
            <person name="Ketteler R."/>
        </authorList>
    </citation>
    <scope>PROTEOLYTIC CLEAVAGE</scope>
    <scope>SUBCELLULAR LOCATION</scope>
</reference>
<reference key="30">
    <citation type="journal article" date="2019" name="Mol. Cell">
        <title>Intrinsically disordered protein TEX264 mediates ER-phagy.</title>
        <authorList>
            <person name="Chino H."/>
            <person name="Hatta T."/>
            <person name="Natsume T."/>
            <person name="Mizushima N."/>
        </authorList>
    </citation>
    <scope>INTERACTION WITH TEX264; FUNCTION</scope>
</reference>
<reference key="31">
    <citation type="journal article" date="2019" name="Mol. Cell">
        <title>TEX264 is an endoplasmic reticulum-resident ATG8-interacting protein critical for ER remodeling during nutrient stress.</title>
        <authorList>
            <person name="An H."/>
            <person name="Ordureau A."/>
            <person name="Paulo J.A."/>
            <person name="Shoemaker C.J."/>
            <person name="Denic V."/>
            <person name="Harper J.W."/>
        </authorList>
    </citation>
    <scope>INTERACTION WITH TEX264; FUNCTION</scope>
</reference>
<reference key="32">
    <citation type="journal article" date="2019" name="BMB Rep.">
        <title>LIR motifs and the membrane-targeting domain are complementary in the function of RavZ.</title>
        <authorList>
            <person name="Park S.W."/>
            <person name="Jun Y.W."/>
            <person name="Jeon P."/>
            <person name="Lee Y.K."/>
            <person name="Park J.H."/>
            <person name="Lee S.H."/>
            <person name="Lee J.A."/>
            <person name="Jang D.J."/>
        </authorList>
    </citation>
    <scope>DECONJUGATION BY LEGIONELLA RAVZ (MICROBIAL INFECTION)</scope>
</reference>
<reference key="33">
    <citation type="journal article" date="2020" name="Dev. Cell">
        <title>A DNM2 Centronuclear Myopathy Mutation Reveals a Link between Recycling Endosome Scission and Autophagy.</title>
        <authorList>
            <person name="Puri C."/>
            <person name="Manni M.M."/>
            <person name="Vicinanza M."/>
            <person name="Hilcenko C."/>
            <person name="Zhu Y."/>
            <person name="Runwal G."/>
            <person name="Stamatakou E."/>
            <person name="Menzies F.M."/>
            <person name="Mamchaoui K."/>
            <person name="Bitoun M."/>
            <person name="Rubinsztein D.C."/>
        </authorList>
    </citation>
    <scope>INTERACTION WITH DNM2</scope>
</reference>
<reference key="34">
    <citation type="journal article" date="2021" name="EMBO Rep.">
        <title>Role of FAM134 paralogues in endoplasmic reticulum remodeling, ER-phagy, and Collagen quality control.</title>
        <authorList>
            <person name="Reggio A."/>
            <person name="Buonomo V."/>
            <person name="Berkane R."/>
            <person name="Bhaskara R.M."/>
            <person name="Tellechea M."/>
            <person name="Peluso I."/>
            <person name="Polishchuk E."/>
            <person name="Di Lorenzo G."/>
            <person name="Cirillo C."/>
            <person name="Esposito M."/>
            <person name="Hussain A."/>
            <person name="Huebner A.K."/>
            <person name="Huebner C.A."/>
            <person name="Settembre C."/>
            <person name="Hummer G."/>
            <person name="Grumati P."/>
            <person name="Stolz A."/>
        </authorList>
    </citation>
    <scope>INTERACTION WITH RETREG1; RETREG2 AND RETREG3</scope>
</reference>
<reference key="35">
    <citation type="journal article" date="2021" name="Mol. Cell">
        <title>Non-canonical autophagy drives alternative ATG8 conjugation to phosphatidylserine.</title>
        <authorList>
            <person name="Durgan J."/>
            <person name="Lystad A.H."/>
            <person name="Sloan K."/>
            <person name="Carlsson S.R."/>
            <person name="Wilson M.I."/>
            <person name="Marcassa E."/>
            <person name="Ulferts R."/>
            <person name="Webster J."/>
            <person name="Lopez-Clavijo A.F."/>
            <person name="Wakelam M.J."/>
            <person name="Beale R."/>
            <person name="Simonsen A."/>
            <person name="Oxley D."/>
            <person name="Florey O."/>
        </authorList>
    </citation>
    <scope>LIPIDATION AT GLY-116</scope>
</reference>
<reference key="36">
    <citation type="submission" date="2007-09" db="PDB data bank">
        <title>Crystal structure of human gamma-aminobutyric acid receptor-associated protein-like 1 (GABARAP1).</title>
        <authorList>
            <consortium name="Structural genomics consortium (SGC)"/>
        </authorList>
    </citation>
    <scope>X-RAY CRYSTALLOGRAPHY (1.65 ANGSTROMS) OF 3-111</scope>
</reference>
<reference evidence="38 39" key="37">
    <citation type="journal article" date="2017" name="Autophagy">
        <title>ATG4B contains a C-terminal LIR motif important for binding and efficient cleavage of mammalian orthologs of yeast Atg8.</title>
        <authorList>
            <person name="Skytte Rasmussen M."/>
            <person name="Mouilleron S."/>
            <person name="Kumar Shrestha B."/>
            <person name="Wirth M."/>
            <person name="Lee R."/>
            <person name="Bowitz Larsen K."/>
            <person name="Abudu Princely Y."/>
            <person name="O'Reilly N."/>
            <person name="Sjottem E."/>
            <person name="Tooze S.A."/>
            <person name="Lamark T."/>
            <person name="Johansen T."/>
        </authorList>
    </citation>
    <scope>X-RAY CRYSTALLOGRAPHY (1.44 ANGSTROMS) IN COMPLEX WITH ATG4B</scope>
    <scope>PROTEOLYTIC CLEAVAGE</scope>
    <scope>MUTAGENESIS OF HIS-9; ARG-28; ARG-47 AND ARG-67</scope>
</reference>
<protein>
    <recommendedName>
        <fullName evidence="33">Gamma-aminobutyric acid receptor-associated protein-like 1</fullName>
    </recommendedName>
    <alternativeName>
        <fullName>Early estrogen-regulated protein</fullName>
    </alternativeName>
    <alternativeName>
        <fullName>GABA(A) receptor-associated protein-like 1</fullName>
    </alternativeName>
    <alternativeName>
        <fullName>Glandular epithelial cell protein 1</fullName>
        <shortName>GEC-1</shortName>
    </alternativeName>
</protein>
<dbReference type="EMBL" id="AF287012">
    <property type="protein sequence ID" value="AAK55962.1"/>
    <property type="molecule type" value="mRNA"/>
</dbReference>
<dbReference type="EMBL" id="AF087847">
    <property type="protein sequence ID" value="AAK20399.1"/>
    <property type="molecule type" value="mRNA"/>
</dbReference>
<dbReference type="EMBL" id="JN663881">
    <property type="protein sequence ID" value="AEZ06294.1"/>
    <property type="molecule type" value="mRNA"/>
</dbReference>
<dbReference type="EMBL" id="AL136676">
    <property type="protein sequence ID" value="CAB66611.1"/>
    <property type="molecule type" value="mRNA"/>
</dbReference>
<dbReference type="EMBL" id="AK303581">
    <property type="protein sequence ID" value="BAG64599.1"/>
    <property type="molecule type" value="mRNA"/>
</dbReference>
<dbReference type="EMBL" id="CR533480">
    <property type="protein sequence ID" value="CAG38511.1"/>
    <property type="molecule type" value="mRNA"/>
</dbReference>
<dbReference type="EMBL" id="AC115676">
    <property type="status" value="NOT_ANNOTATED_CDS"/>
    <property type="molecule type" value="Genomic_DNA"/>
</dbReference>
<dbReference type="EMBL" id="CH471094">
    <property type="protein sequence ID" value="EAW96164.1"/>
    <property type="molecule type" value="Genomic_DNA"/>
</dbReference>
<dbReference type="EMBL" id="BC009309">
    <property type="protein sequence ID" value="AAH09309.1"/>
    <property type="molecule type" value="mRNA"/>
</dbReference>
<dbReference type="EMBL" id="BC028315">
    <property type="protein sequence ID" value="AAH28315.1"/>
    <property type="molecule type" value="mRNA"/>
</dbReference>
<dbReference type="CCDS" id="CCDS8620.1">
    <molecule id="Q9H0R8-1"/>
</dbReference>
<dbReference type="CCDS" id="CCDS86280.1">
    <molecule id="Q9H0R8-2"/>
</dbReference>
<dbReference type="RefSeq" id="NP_001350527.1">
    <molecule id="Q9H0R8-2"/>
    <property type="nucleotide sequence ID" value="NM_001363598.2"/>
</dbReference>
<dbReference type="RefSeq" id="NP_113600.1">
    <molecule id="Q9H0R8-1"/>
    <property type="nucleotide sequence ID" value="NM_031412.4"/>
</dbReference>
<dbReference type="RefSeq" id="XP_005253401.1">
    <property type="nucleotide sequence ID" value="XM_005253344.4"/>
</dbReference>
<dbReference type="PDB" id="2L8J">
    <property type="method" value="NMR"/>
    <property type="chains" value="A=2-115"/>
</dbReference>
<dbReference type="PDB" id="2R2Q">
    <property type="method" value="X-ray"/>
    <property type="resolution" value="1.65 A"/>
    <property type="chains" value="A/B=3-111"/>
</dbReference>
<dbReference type="PDB" id="5DPT">
    <property type="method" value="X-ray"/>
    <property type="resolution" value="2.90 A"/>
    <property type="chains" value="A/B=2-117"/>
</dbReference>
<dbReference type="PDB" id="5LXH">
    <property type="method" value="X-ray"/>
    <property type="resolution" value="1.58 A"/>
    <property type="chains" value="A/B/C=1-117"/>
</dbReference>
<dbReference type="PDB" id="5LXI">
    <property type="method" value="X-ray"/>
    <property type="resolution" value="1.44 A"/>
    <property type="chains" value="B/D=1-117"/>
</dbReference>
<dbReference type="PDB" id="6HOI">
    <property type="method" value="X-ray"/>
    <property type="resolution" value="1.14 A"/>
    <property type="chains" value="A/B=1-117"/>
</dbReference>
<dbReference type="PDB" id="6HOL">
    <property type="method" value="X-ray"/>
    <property type="resolution" value="1.40 A"/>
    <property type="chains" value="A/B=1-117"/>
</dbReference>
<dbReference type="PDB" id="6YOO">
    <property type="method" value="X-ray"/>
    <property type="resolution" value="1.06 A"/>
    <property type="chains" value="A=1-117"/>
</dbReference>
<dbReference type="PDB" id="7AA7">
    <property type="method" value="X-ray"/>
    <property type="resolution" value="1.45 A"/>
    <property type="chains" value="A/B=1-117"/>
</dbReference>
<dbReference type="PDB" id="7AA9">
    <property type="method" value="X-ray"/>
    <property type="resolution" value="1.72 A"/>
    <property type="chains" value="A/C/E/G/I/K=1-117"/>
</dbReference>
<dbReference type="PDB" id="7JHX">
    <property type="method" value="X-ray"/>
    <property type="resolution" value="1.91 A"/>
    <property type="chains" value="A/B=1-117"/>
</dbReference>
<dbReference type="PDB" id="8X8A">
    <property type="method" value="X-ray"/>
    <property type="resolution" value="1.53 A"/>
    <property type="chains" value="A=1-117"/>
</dbReference>
<dbReference type="PDBsum" id="2L8J"/>
<dbReference type="PDBsum" id="2R2Q"/>
<dbReference type="PDBsum" id="5DPT"/>
<dbReference type="PDBsum" id="5LXH"/>
<dbReference type="PDBsum" id="5LXI"/>
<dbReference type="PDBsum" id="6HOI"/>
<dbReference type="PDBsum" id="6HOL"/>
<dbReference type="PDBsum" id="6YOO"/>
<dbReference type="PDBsum" id="7AA7"/>
<dbReference type="PDBsum" id="7AA9"/>
<dbReference type="PDBsum" id="7JHX"/>
<dbReference type="PDBsum" id="8X8A"/>
<dbReference type="SMR" id="Q9H0R8"/>
<dbReference type="BioGRID" id="117223">
    <property type="interactions" value="161"/>
</dbReference>
<dbReference type="DIP" id="DIP-35597N"/>
<dbReference type="ELM" id="Q9H0R8"/>
<dbReference type="FunCoup" id="Q9H0R8">
    <property type="interactions" value="1579"/>
</dbReference>
<dbReference type="IntAct" id="Q9H0R8">
    <property type="interactions" value="637"/>
</dbReference>
<dbReference type="MINT" id="Q9H0R8"/>
<dbReference type="ChEMBL" id="CHEMBL4879515"/>
<dbReference type="GlyGen" id="Q9H0R8">
    <property type="glycosylation" value="2 sites, 1 O-linked glycan (1 site)"/>
</dbReference>
<dbReference type="iPTMnet" id="Q9H0R8"/>
<dbReference type="PhosphoSitePlus" id="Q9H0R8"/>
<dbReference type="BioMuta" id="GABARAPL1"/>
<dbReference type="DMDM" id="44887973"/>
<dbReference type="jPOST" id="Q9H0R8"/>
<dbReference type="MassIVE" id="Q9H0R8"/>
<dbReference type="PaxDb" id="9606-ENSP00000266458"/>
<dbReference type="PeptideAtlas" id="Q9H0R8"/>
<dbReference type="ProteomicsDB" id="5710"/>
<dbReference type="ProteomicsDB" id="80321">
    <molecule id="Q9H0R8-1"/>
</dbReference>
<dbReference type="Pumba" id="Q9H0R8"/>
<dbReference type="Antibodypedia" id="42119">
    <property type="antibodies" value="395 antibodies from 31 providers"/>
</dbReference>
<dbReference type="DNASU" id="23710"/>
<dbReference type="Ensembl" id="ENST00000266458.10">
    <molecule id="Q9H0R8-1"/>
    <property type="protein sequence ID" value="ENSP00000266458.5"/>
    <property type="gene ID" value="ENSG00000139112.11"/>
</dbReference>
<dbReference type="Ensembl" id="ENST00000421801.6">
    <molecule id="Q9H0R8-2"/>
    <property type="protein sequence ID" value="ENSP00000411256.2"/>
    <property type="gene ID" value="ENSG00000139112.11"/>
</dbReference>
<dbReference type="Ensembl" id="ENST00000543602.5">
    <molecule id="Q9H0R8-2"/>
    <property type="protein sequence ID" value="ENSP00000445857.1"/>
    <property type="gene ID" value="ENSG00000139112.11"/>
</dbReference>
<dbReference type="Ensembl" id="ENST00000545887.1">
    <molecule id="Q9H0R8-1"/>
    <property type="protein sequence ID" value="ENSP00000444186.1"/>
    <property type="gene ID" value="ENSG00000139112.11"/>
</dbReference>
<dbReference type="GeneID" id="23710"/>
<dbReference type="KEGG" id="hsa:23710"/>
<dbReference type="MANE-Select" id="ENST00000266458.10">
    <property type="protein sequence ID" value="ENSP00000266458.5"/>
    <property type="RefSeq nucleotide sequence ID" value="NM_031412.4"/>
    <property type="RefSeq protein sequence ID" value="NP_113600.1"/>
</dbReference>
<dbReference type="UCSC" id="uc001qxs.4">
    <molecule id="Q9H0R8-1"/>
    <property type="organism name" value="human"/>
</dbReference>
<dbReference type="AGR" id="HGNC:4068"/>
<dbReference type="CTD" id="23710"/>
<dbReference type="DisGeNET" id="23710"/>
<dbReference type="GeneCards" id="GABARAPL1"/>
<dbReference type="HGNC" id="HGNC:4068">
    <property type="gene designation" value="GABARAPL1"/>
</dbReference>
<dbReference type="HPA" id="ENSG00000139112">
    <property type="expression patterns" value="Low tissue specificity"/>
</dbReference>
<dbReference type="MIM" id="607420">
    <property type="type" value="gene"/>
</dbReference>
<dbReference type="neXtProt" id="NX_Q9H0R8"/>
<dbReference type="OpenTargets" id="ENSG00000139112"/>
<dbReference type="PharmGKB" id="PA28481"/>
<dbReference type="VEuPathDB" id="HostDB:ENSG00000139112"/>
<dbReference type="eggNOG" id="KOG1654">
    <property type="taxonomic scope" value="Eukaryota"/>
</dbReference>
<dbReference type="GeneTree" id="ENSGT00940000156876"/>
<dbReference type="HOGENOM" id="CLU_146808_0_0_1"/>
<dbReference type="InParanoid" id="Q9H0R8"/>
<dbReference type="OMA" id="KNQIRAK"/>
<dbReference type="OrthoDB" id="6738456at2759"/>
<dbReference type="PAN-GO" id="Q9H0R8">
    <property type="GO annotations" value="9 GO annotations based on evolutionary models"/>
</dbReference>
<dbReference type="PhylomeDB" id="Q9H0R8"/>
<dbReference type="TreeFam" id="TF314556"/>
<dbReference type="PathwayCommons" id="Q9H0R8"/>
<dbReference type="Reactome" id="R-HSA-1632852">
    <property type="pathway name" value="Macroautophagy"/>
</dbReference>
<dbReference type="SABIO-RK" id="Q9H0R8"/>
<dbReference type="SignaLink" id="Q9H0R8"/>
<dbReference type="SIGNOR" id="Q9H0R8"/>
<dbReference type="BioGRID-ORCS" id="23710">
    <property type="hits" value="11 hits in 1154 CRISPR screens"/>
</dbReference>
<dbReference type="ChiTaRS" id="GABARAPL1">
    <property type="organism name" value="human"/>
</dbReference>
<dbReference type="EvolutionaryTrace" id="Q9H0R8"/>
<dbReference type="GenomeRNAi" id="23710"/>
<dbReference type="Pharos" id="Q9H0R8">
    <property type="development level" value="Tbio"/>
</dbReference>
<dbReference type="PRO" id="PR:Q9H0R8"/>
<dbReference type="Proteomes" id="UP000005640">
    <property type="component" value="Chromosome 12"/>
</dbReference>
<dbReference type="RNAct" id="Q9H0R8">
    <property type="molecule type" value="protein"/>
</dbReference>
<dbReference type="Bgee" id="ENSG00000139112">
    <property type="expression patterns" value="Expressed in Brodmann (1909) area 23 and 214 other cell types or tissues"/>
</dbReference>
<dbReference type="ExpressionAtlas" id="Q9H0R8">
    <property type="expression patterns" value="baseline and differential"/>
</dbReference>
<dbReference type="GO" id="GO:0005776">
    <property type="term" value="C:autophagosome"/>
    <property type="evidence" value="ECO:0000314"/>
    <property type="project" value="MGI"/>
</dbReference>
<dbReference type="GO" id="GO:0000421">
    <property type="term" value="C:autophagosome membrane"/>
    <property type="evidence" value="ECO:0000318"/>
    <property type="project" value="GO_Central"/>
</dbReference>
<dbReference type="GO" id="GO:0036064">
    <property type="term" value="C:ciliary basal body"/>
    <property type="evidence" value="ECO:0000314"/>
    <property type="project" value="HPA"/>
</dbReference>
<dbReference type="GO" id="GO:0005929">
    <property type="term" value="C:cilium"/>
    <property type="evidence" value="ECO:0000314"/>
    <property type="project" value="HPA"/>
</dbReference>
<dbReference type="GO" id="GO:0030659">
    <property type="term" value="C:cytoplasmic vesicle membrane"/>
    <property type="evidence" value="ECO:0007669"/>
    <property type="project" value="UniProtKB-SubCell"/>
</dbReference>
<dbReference type="GO" id="GO:0005829">
    <property type="term" value="C:cytosol"/>
    <property type="evidence" value="ECO:0000314"/>
    <property type="project" value="HPA"/>
</dbReference>
<dbReference type="GO" id="GO:0005783">
    <property type="term" value="C:endoplasmic reticulum"/>
    <property type="evidence" value="ECO:0007669"/>
    <property type="project" value="UniProtKB-SubCell"/>
</dbReference>
<dbReference type="GO" id="GO:0005794">
    <property type="term" value="C:Golgi apparatus"/>
    <property type="evidence" value="ECO:0007669"/>
    <property type="project" value="UniProtKB-SubCell"/>
</dbReference>
<dbReference type="GO" id="GO:0043231">
    <property type="term" value="C:intracellular membrane-bounded organelle"/>
    <property type="evidence" value="ECO:0000314"/>
    <property type="project" value="HPA"/>
</dbReference>
<dbReference type="GO" id="GO:0005874">
    <property type="term" value="C:microtubule"/>
    <property type="evidence" value="ECO:0007669"/>
    <property type="project" value="UniProtKB-KW"/>
</dbReference>
<dbReference type="GO" id="GO:0005886">
    <property type="term" value="C:plasma membrane"/>
    <property type="evidence" value="ECO:0000314"/>
    <property type="project" value="HPA"/>
</dbReference>
<dbReference type="GO" id="GO:0048487">
    <property type="term" value="F:beta-tubulin binding"/>
    <property type="evidence" value="ECO:0000250"/>
    <property type="project" value="UniProtKB"/>
</dbReference>
<dbReference type="GO" id="GO:0050811">
    <property type="term" value="F:GABA receptor binding"/>
    <property type="evidence" value="ECO:0000250"/>
    <property type="project" value="UniProtKB"/>
</dbReference>
<dbReference type="GO" id="GO:0008429">
    <property type="term" value="F:phosphatidylethanolamine binding"/>
    <property type="evidence" value="ECO:0000318"/>
    <property type="project" value="GO_Central"/>
</dbReference>
<dbReference type="GO" id="GO:0005543">
    <property type="term" value="F:phospholipid binding"/>
    <property type="evidence" value="ECO:0000314"/>
    <property type="project" value="UniProt"/>
</dbReference>
<dbReference type="GO" id="GO:0030957">
    <property type="term" value="F:Tat protein binding"/>
    <property type="evidence" value="ECO:0000353"/>
    <property type="project" value="UniProtKB"/>
</dbReference>
<dbReference type="GO" id="GO:0031625">
    <property type="term" value="F:ubiquitin protein ligase binding"/>
    <property type="evidence" value="ECO:0000353"/>
    <property type="project" value="UniProtKB"/>
</dbReference>
<dbReference type="GO" id="GO:0000045">
    <property type="term" value="P:autophagosome assembly"/>
    <property type="evidence" value="ECO:0000318"/>
    <property type="project" value="GO_Central"/>
</dbReference>
<dbReference type="GO" id="GO:0097352">
    <property type="term" value="P:autophagosome maturation"/>
    <property type="evidence" value="ECO:0000318"/>
    <property type="project" value="GO_Central"/>
</dbReference>
<dbReference type="GO" id="GO:0006995">
    <property type="term" value="P:cellular response to nitrogen starvation"/>
    <property type="evidence" value="ECO:0000318"/>
    <property type="project" value="GO_Central"/>
</dbReference>
<dbReference type="GO" id="GO:0061723">
    <property type="term" value="P:glycophagy"/>
    <property type="evidence" value="ECO:0007669"/>
    <property type="project" value="Ensembl"/>
</dbReference>
<dbReference type="GO" id="GO:0000423">
    <property type="term" value="P:mitophagy"/>
    <property type="evidence" value="ECO:0000318"/>
    <property type="project" value="GO_Central"/>
</dbReference>
<dbReference type="CDD" id="cd16127">
    <property type="entry name" value="Ubl_ATG8_GABARAP_like"/>
    <property type="match status" value="1"/>
</dbReference>
<dbReference type="FunFam" id="3.10.20.90:FF:000037">
    <property type="entry name" value="Gamma-aminobutyric acid receptor-associated protein-like 1"/>
    <property type="match status" value="1"/>
</dbReference>
<dbReference type="Gene3D" id="3.10.20.90">
    <property type="entry name" value="Phosphatidylinositol 3-kinase Catalytic Subunit, Chain A, domain 1"/>
    <property type="match status" value="1"/>
</dbReference>
<dbReference type="InterPro" id="IPR004241">
    <property type="entry name" value="Atg8-like"/>
</dbReference>
<dbReference type="InterPro" id="IPR029071">
    <property type="entry name" value="Ubiquitin-like_domsf"/>
</dbReference>
<dbReference type="PANTHER" id="PTHR10969">
    <property type="entry name" value="MICROTUBULE-ASSOCIATED PROTEINS 1A/1B LIGHT CHAIN 3-RELATED"/>
    <property type="match status" value="1"/>
</dbReference>
<dbReference type="Pfam" id="PF02991">
    <property type="entry name" value="ATG8"/>
    <property type="match status" value="1"/>
</dbReference>
<dbReference type="SUPFAM" id="SSF54236">
    <property type="entry name" value="Ubiquitin-like"/>
    <property type="match status" value="1"/>
</dbReference>
<proteinExistence type="evidence at protein level"/>
<accession>Q9H0R8</accession>
<accession>B4E0Y7</accession>
<accession>Q6FIE6</accession>
<name>GBRL1_HUMAN</name>